<keyword id="KW-0028">Amino-acid biosynthesis</keyword>
<keyword id="KW-0057">Aromatic amino acid biosynthesis</keyword>
<keyword id="KW-0456">Lyase</keyword>
<keyword id="KW-1185">Reference proteome</keyword>
<keyword id="KW-0822">Tryptophan biosynthesis</keyword>
<proteinExistence type="inferred from homology"/>
<protein>
    <recommendedName>
        <fullName evidence="1">Tryptophan synthase alpha chain</fullName>
        <ecNumber evidence="1">4.2.1.20</ecNumber>
    </recommendedName>
</protein>
<feature type="chain" id="PRO_1000018204" description="Tryptophan synthase alpha chain">
    <location>
        <begin position="1"/>
        <end position="269"/>
    </location>
</feature>
<feature type="active site" description="Proton acceptor" evidence="1">
    <location>
        <position position="50"/>
    </location>
</feature>
<feature type="active site" description="Proton acceptor" evidence="1">
    <location>
        <position position="61"/>
    </location>
</feature>
<evidence type="ECO:0000255" key="1">
    <source>
        <dbReference type="HAMAP-Rule" id="MF_00131"/>
    </source>
</evidence>
<comment type="function">
    <text evidence="1">The alpha subunit is responsible for the aldol cleavage of indoleglycerol phosphate to indole and glyceraldehyde 3-phosphate.</text>
</comment>
<comment type="catalytic activity">
    <reaction evidence="1">
        <text>(1S,2R)-1-C-(indol-3-yl)glycerol 3-phosphate + L-serine = D-glyceraldehyde 3-phosphate + L-tryptophan + H2O</text>
        <dbReference type="Rhea" id="RHEA:10532"/>
        <dbReference type="ChEBI" id="CHEBI:15377"/>
        <dbReference type="ChEBI" id="CHEBI:33384"/>
        <dbReference type="ChEBI" id="CHEBI:57912"/>
        <dbReference type="ChEBI" id="CHEBI:58866"/>
        <dbReference type="ChEBI" id="CHEBI:59776"/>
        <dbReference type="EC" id="4.2.1.20"/>
    </reaction>
</comment>
<comment type="pathway">
    <text evidence="1">Amino-acid biosynthesis; L-tryptophan biosynthesis; L-tryptophan from chorismate: step 5/5.</text>
</comment>
<comment type="subunit">
    <text evidence="1">Tetramer of two alpha and two beta chains.</text>
</comment>
<comment type="similarity">
    <text evidence="1">Belongs to the TrpA family.</text>
</comment>
<reference key="1">
    <citation type="submission" date="2006-03" db="EMBL/GenBank/DDBJ databases">
        <title>Complete genome sequence of Francisella tularensis LVS (Live Vaccine Strain).</title>
        <authorList>
            <person name="Chain P."/>
            <person name="Larimer F."/>
            <person name="Land M."/>
            <person name="Stilwagen S."/>
            <person name="Larsson P."/>
            <person name="Bearden S."/>
            <person name="Chu M."/>
            <person name="Oyston P."/>
            <person name="Forsman M."/>
            <person name="Andersson S."/>
            <person name="Lindler L."/>
            <person name="Titball R."/>
            <person name="Garcia E."/>
        </authorList>
    </citation>
    <scope>NUCLEOTIDE SEQUENCE [LARGE SCALE GENOMIC DNA]</scope>
    <source>
        <strain>LVS</strain>
    </source>
</reference>
<organism>
    <name type="scientific">Francisella tularensis subsp. holarctica (strain LVS)</name>
    <dbReference type="NCBI Taxonomy" id="376619"/>
    <lineage>
        <taxon>Bacteria</taxon>
        <taxon>Pseudomonadati</taxon>
        <taxon>Pseudomonadota</taxon>
        <taxon>Gammaproteobacteria</taxon>
        <taxon>Thiotrichales</taxon>
        <taxon>Francisellaceae</taxon>
        <taxon>Francisella</taxon>
    </lineage>
</organism>
<accession>Q2A5V4</accession>
<gene>
    <name evidence="1" type="primary">trpA</name>
    <name type="ordered locus">FTL_0098</name>
</gene>
<sequence>MTNRYTTLFANLEKRNEGAFIPFVTIGDPNKALSFEIIDTLVSSGADALELGIPFSDHLADGPTIQEANIRALESGITPKDCFDILTKIRAKYPHIPIGLLLYANLVYANGIENFYQKCLDAGVDSILIADVPAHESKEFRDIAKKVGIAQIFIAPPDASESTLKQISKLGSGYTYLLSRVGVTGTETAANMPVEDVLAKLREYNAPKPVLGFGISKPEQVQQAIKAGAAGAISGSATVKIIQNNISNKQKMLNELTYFVKEMKAATLN</sequence>
<name>TRPA_FRATH</name>
<dbReference type="EC" id="4.2.1.20" evidence="1"/>
<dbReference type="EMBL" id="AM233362">
    <property type="protein sequence ID" value="CAJ78539.1"/>
    <property type="molecule type" value="Genomic_DNA"/>
</dbReference>
<dbReference type="RefSeq" id="WP_003014080.1">
    <property type="nucleotide sequence ID" value="NZ_CP009694.1"/>
</dbReference>
<dbReference type="SMR" id="Q2A5V4"/>
<dbReference type="KEGG" id="ftl:FTL_0098"/>
<dbReference type="UniPathway" id="UPA00035">
    <property type="reaction ID" value="UER00044"/>
</dbReference>
<dbReference type="Proteomes" id="UP000001944">
    <property type="component" value="Chromosome"/>
</dbReference>
<dbReference type="GO" id="GO:0005829">
    <property type="term" value="C:cytosol"/>
    <property type="evidence" value="ECO:0007669"/>
    <property type="project" value="TreeGrafter"/>
</dbReference>
<dbReference type="GO" id="GO:0004834">
    <property type="term" value="F:tryptophan synthase activity"/>
    <property type="evidence" value="ECO:0007669"/>
    <property type="project" value="UniProtKB-UniRule"/>
</dbReference>
<dbReference type="CDD" id="cd04724">
    <property type="entry name" value="Tryptophan_synthase_alpha"/>
    <property type="match status" value="1"/>
</dbReference>
<dbReference type="FunFam" id="3.20.20.70:FF:000037">
    <property type="entry name" value="Tryptophan synthase alpha chain"/>
    <property type="match status" value="1"/>
</dbReference>
<dbReference type="Gene3D" id="3.20.20.70">
    <property type="entry name" value="Aldolase class I"/>
    <property type="match status" value="1"/>
</dbReference>
<dbReference type="HAMAP" id="MF_00131">
    <property type="entry name" value="Trp_synth_alpha"/>
    <property type="match status" value="1"/>
</dbReference>
<dbReference type="InterPro" id="IPR013785">
    <property type="entry name" value="Aldolase_TIM"/>
</dbReference>
<dbReference type="InterPro" id="IPR011060">
    <property type="entry name" value="RibuloseP-bd_barrel"/>
</dbReference>
<dbReference type="InterPro" id="IPR002028">
    <property type="entry name" value="Trp_synthase_suA"/>
</dbReference>
<dbReference type="NCBIfam" id="TIGR00262">
    <property type="entry name" value="trpA"/>
    <property type="match status" value="1"/>
</dbReference>
<dbReference type="PANTHER" id="PTHR43406:SF1">
    <property type="entry name" value="TRYPTOPHAN SYNTHASE ALPHA CHAIN, CHLOROPLASTIC"/>
    <property type="match status" value="1"/>
</dbReference>
<dbReference type="PANTHER" id="PTHR43406">
    <property type="entry name" value="TRYPTOPHAN SYNTHASE, ALPHA CHAIN"/>
    <property type="match status" value="1"/>
</dbReference>
<dbReference type="Pfam" id="PF00290">
    <property type="entry name" value="Trp_syntA"/>
    <property type="match status" value="1"/>
</dbReference>
<dbReference type="SUPFAM" id="SSF51366">
    <property type="entry name" value="Ribulose-phoshate binding barrel"/>
    <property type="match status" value="1"/>
</dbReference>